<keyword id="KW-1185">Reference proteome</keyword>
<keyword id="KW-0687">Ribonucleoprotein</keyword>
<keyword id="KW-0689">Ribosomal protein</keyword>
<keyword id="KW-0694">RNA-binding</keyword>
<keyword id="KW-0699">rRNA-binding</keyword>
<name>RS20_ACTP2</name>
<gene>
    <name evidence="1" type="primary">rpsT</name>
    <name type="ordered locus">APL_1558</name>
</gene>
<accession>A3N2K6</accession>
<protein>
    <recommendedName>
        <fullName evidence="1">Small ribosomal subunit protein bS20</fullName>
    </recommendedName>
    <alternativeName>
        <fullName evidence="3">30S ribosomal protein S20</fullName>
    </alternativeName>
</protein>
<evidence type="ECO:0000255" key="1">
    <source>
        <dbReference type="HAMAP-Rule" id="MF_00500"/>
    </source>
</evidence>
<evidence type="ECO:0000256" key="2">
    <source>
        <dbReference type="SAM" id="MobiDB-lite"/>
    </source>
</evidence>
<evidence type="ECO:0000305" key="3"/>
<reference key="1">
    <citation type="journal article" date="2008" name="J. Bacteriol.">
        <title>The complete genome sequence of Actinobacillus pleuropneumoniae L20 (serotype 5b).</title>
        <authorList>
            <person name="Foote S.J."/>
            <person name="Bosse J.T."/>
            <person name="Bouevitch A.B."/>
            <person name="Langford P.R."/>
            <person name="Young N.M."/>
            <person name="Nash J.H.E."/>
        </authorList>
    </citation>
    <scope>NUCLEOTIDE SEQUENCE [LARGE SCALE GENOMIC DNA]</scope>
    <source>
        <strain>L20</strain>
    </source>
</reference>
<sequence>MANIKSAKKRAVQSEKRRQHNASQRSMMRTFIKKVYAAVAAGDKAASQAAFVEMQKVVDRMASKGLIHANKAANHKAKLAAQIKKLA</sequence>
<organism>
    <name type="scientific">Actinobacillus pleuropneumoniae serotype 5b (strain L20)</name>
    <dbReference type="NCBI Taxonomy" id="416269"/>
    <lineage>
        <taxon>Bacteria</taxon>
        <taxon>Pseudomonadati</taxon>
        <taxon>Pseudomonadota</taxon>
        <taxon>Gammaproteobacteria</taxon>
        <taxon>Pasteurellales</taxon>
        <taxon>Pasteurellaceae</taxon>
        <taxon>Actinobacillus</taxon>
    </lineage>
</organism>
<feature type="chain" id="PRO_1000014540" description="Small ribosomal subunit protein bS20">
    <location>
        <begin position="1"/>
        <end position="87"/>
    </location>
</feature>
<feature type="region of interest" description="Disordered" evidence="2">
    <location>
        <begin position="1"/>
        <end position="26"/>
    </location>
</feature>
<feature type="compositionally biased region" description="Basic residues" evidence="2">
    <location>
        <begin position="1"/>
        <end position="11"/>
    </location>
</feature>
<comment type="function">
    <text evidence="1">Binds directly to 16S ribosomal RNA.</text>
</comment>
<comment type="similarity">
    <text evidence="1">Belongs to the bacterial ribosomal protein bS20 family.</text>
</comment>
<dbReference type="EMBL" id="CP000569">
    <property type="protein sequence ID" value="ABN74642.1"/>
    <property type="molecule type" value="Genomic_DNA"/>
</dbReference>
<dbReference type="RefSeq" id="WP_005619152.1">
    <property type="nucleotide sequence ID" value="NC_009053.1"/>
</dbReference>
<dbReference type="SMR" id="A3N2K6"/>
<dbReference type="STRING" id="416269.APL_1558"/>
<dbReference type="EnsemblBacteria" id="ABN74642">
    <property type="protein sequence ID" value="ABN74642"/>
    <property type="gene ID" value="APL_1558"/>
</dbReference>
<dbReference type="GeneID" id="92743658"/>
<dbReference type="KEGG" id="apl:APL_1558"/>
<dbReference type="eggNOG" id="COG0268">
    <property type="taxonomic scope" value="Bacteria"/>
</dbReference>
<dbReference type="HOGENOM" id="CLU_160655_4_0_6"/>
<dbReference type="Proteomes" id="UP000001432">
    <property type="component" value="Chromosome"/>
</dbReference>
<dbReference type="GO" id="GO:0005829">
    <property type="term" value="C:cytosol"/>
    <property type="evidence" value="ECO:0007669"/>
    <property type="project" value="TreeGrafter"/>
</dbReference>
<dbReference type="GO" id="GO:0015935">
    <property type="term" value="C:small ribosomal subunit"/>
    <property type="evidence" value="ECO:0007669"/>
    <property type="project" value="TreeGrafter"/>
</dbReference>
<dbReference type="GO" id="GO:0070181">
    <property type="term" value="F:small ribosomal subunit rRNA binding"/>
    <property type="evidence" value="ECO:0007669"/>
    <property type="project" value="TreeGrafter"/>
</dbReference>
<dbReference type="GO" id="GO:0003735">
    <property type="term" value="F:structural constituent of ribosome"/>
    <property type="evidence" value="ECO:0007669"/>
    <property type="project" value="InterPro"/>
</dbReference>
<dbReference type="GO" id="GO:0006412">
    <property type="term" value="P:translation"/>
    <property type="evidence" value="ECO:0007669"/>
    <property type="project" value="UniProtKB-UniRule"/>
</dbReference>
<dbReference type="FunFam" id="1.20.58.110:FF:000001">
    <property type="entry name" value="30S ribosomal protein S20"/>
    <property type="match status" value="1"/>
</dbReference>
<dbReference type="Gene3D" id="1.20.58.110">
    <property type="entry name" value="Ribosomal protein S20"/>
    <property type="match status" value="1"/>
</dbReference>
<dbReference type="HAMAP" id="MF_00500">
    <property type="entry name" value="Ribosomal_bS20"/>
    <property type="match status" value="1"/>
</dbReference>
<dbReference type="InterPro" id="IPR002583">
    <property type="entry name" value="Ribosomal_bS20"/>
</dbReference>
<dbReference type="InterPro" id="IPR036510">
    <property type="entry name" value="Ribosomal_bS20_sf"/>
</dbReference>
<dbReference type="NCBIfam" id="TIGR00029">
    <property type="entry name" value="S20"/>
    <property type="match status" value="1"/>
</dbReference>
<dbReference type="PANTHER" id="PTHR33398">
    <property type="entry name" value="30S RIBOSOMAL PROTEIN S20"/>
    <property type="match status" value="1"/>
</dbReference>
<dbReference type="PANTHER" id="PTHR33398:SF1">
    <property type="entry name" value="SMALL RIBOSOMAL SUBUNIT PROTEIN BS20C"/>
    <property type="match status" value="1"/>
</dbReference>
<dbReference type="Pfam" id="PF01649">
    <property type="entry name" value="Ribosomal_S20p"/>
    <property type="match status" value="1"/>
</dbReference>
<dbReference type="SUPFAM" id="SSF46992">
    <property type="entry name" value="Ribosomal protein S20"/>
    <property type="match status" value="1"/>
</dbReference>
<proteinExistence type="inferred from homology"/>